<organism>
    <name type="scientific">Xanthomonas oryzae pv. oryzae (strain MAFF 311018)</name>
    <dbReference type="NCBI Taxonomy" id="342109"/>
    <lineage>
        <taxon>Bacteria</taxon>
        <taxon>Pseudomonadati</taxon>
        <taxon>Pseudomonadota</taxon>
        <taxon>Gammaproteobacteria</taxon>
        <taxon>Lysobacterales</taxon>
        <taxon>Lysobacteraceae</taxon>
        <taxon>Xanthomonas</taxon>
    </lineage>
</organism>
<reference key="1">
    <citation type="journal article" date="2005" name="Jpn. Agric. Res. Q.">
        <title>Genome sequence of Xanthomonas oryzae pv. oryzae suggests contribution of large numbers of effector genes and insertion sequences to its race diversity.</title>
        <authorList>
            <person name="Ochiai H."/>
            <person name="Inoue Y."/>
            <person name="Takeya M."/>
            <person name="Sasaki A."/>
            <person name="Kaku H."/>
        </authorList>
    </citation>
    <scope>NUCLEOTIDE SEQUENCE [LARGE SCALE GENOMIC DNA]</scope>
    <source>
        <strain>MAFF 311018</strain>
    </source>
</reference>
<name>QUEC_XANOM</name>
<evidence type="ECO:0000255" key="1">
    <source>
        <dbReference type="HAMAP-Rule" id="MF_01633"/>
    </source>
</evidence>
<protein>
    <recommendedName>
        <fullName evidence="1">7-cyano-7-deazaguanine synthase</fullName>
        <ecNumber evidence="1">6.3.4.20</ecNumber>
    </recommendedName>
    <alternativeName>
        <fullName evidence="1">7-cyano-7-carbaguanine synthase</fullName>
    </alternativeName>
    <alternativeName>
        <fullName evidence="1">PreQ(0) synthase</fullName>
    </alternativeName>
    <alternativeName>
        <fullName evidence="1">Queuosine biosynthesis protein QueC</fullName>
    </alternativeName>
</protein>
<accession>Q2P553</accession>
<comment type="function">
    <text evidence="1">Catalyzes the ATP-dependent conversion of 7-carboxy-7-deazaguanine (CDG) to 7-cyano-7-deazaguanine (preQ(0)).</text>
</comment>
<comment type="catalytic activity">
    <reaction evidence="1">
        <text>7-carboxy-7-deazaguanine + NH4(+) + ATP = 7-cyano-7-deazaguanine + ADP + phosphate + H2O + H(+)</text>
        <dbReference type="Rhea" id="RHEA:27982"/>
        <dbReference type="ChEBI" id="CHEBI:15377"/>
        <dbReference type="ChEBI" id="CHEBI:15378"/>
        <dbReference type="ChEBI" id="CHEBI:28938"/>
        <dbReference type="ChEBI" id="CHEBI:30616"/>
        <dbReference type="ChEBI" id="CHEBI:43474"/>
        <dbReference type="ChEBI" id="CHEBI:45075"/>
        <dbReference type="ChEBI" id="CHEBI:61036"/>
        <dbReference type="ChEBI" id="CHEBI:456216"/>
        <dbReference type="EC" id="6.3.4.20"/>
    </reaction>
</comment>
<comment type="cofactor">
    <cofactor evidence="1">
        <name>Zn(2+)</name>
        <dbReference type="ChEBI" id="CHEBI:29105"/>
    </cofactor>
    <text evidence="1">Binds 1 zinc ion per subunit.</text>
</comment>
<comment type="pathway">
    <text evidence="1">Purine metabolism; 7-cyano-7-deazaguanine biosynthesis.</text>
</comment>
<comment type="similarity">
    <text evidence="1">Belongs to the QueC family.</text>
</comment>
<dbReference type="EC" id="6.3.4.20" evidence="1"/>
<dbReference type="EMBL" id="AP008229">
    <property type="protein sequence ID" value="BAE68324.1"/>
    <property type="molecule type" value="Genomic_DNA"/>
</dbReference>
<dbReference type="RefSeq" id="WP_008578058.1">
    <property type="nucleotide sequence ID" value="NC_007705.1"/>
</dbReference>
<dbReference type="SMR" id="Q2P553"/>
<dbReference type="GeneID" id="97511393"/>
<dbReference type="KEGG" id="xom:XOO1569"/>
<dbReference type="HOGENOM" id="CLU_081854_1_1_6"/>
<dbReference type="UniPathway" id="UPA00391"/>
<dbReference type="GO" id="GO:0005524">
    <property type="term" value="F:ATP binding"/>
    <property type="evidence" value="ECO:0007669"/>
    <property type="project" value="UniProtKB-UniRule"/>
</dbReference>
<dbReference type="GO" id="GO:0016879">
    <property type="term" value="F:ligase activity, forming carbon-nitrogen bonds"/>
    <property type="evidence" value="ECO:0007669"/>
    <property type="project" value="UniProtKB-UniRule"/>
</dbReference>
<dbReference type="GO" id="GO:0008270">
    <property type="term" value="F:zinc ion binding"/>
    <property type="evidence" value="ECO:0007669"/>
    <property type="project" value="UniProtKB-UniRule"/>
</dbReference>
<dbReference type="GO" id="GO:0008616">
    <property type="term" value="P:queuosine biosynthetic process"/>
    <property type="evidence" value="ECO:0007669"/>
    <property type="project" value="UniProtKB-UniRule"/>
</dbReference>
<dbReference type="CDD" id="cd01995">
    <property type="entry name" value="QueC-like"/>
    <property type="match status" value="1"/>
</dbReference>
<dbReference type="FunFam" id="3.40.50.620:FF:000131">
    <property type="entry name" value="7-cyano-7-deazaguanine synthase"/>
    <property type="match status" value="1"/>
</dbReference>
<dbReference type="Gene3D" id="3.40.50.620">
    <property type="entry name" value="HUPs"/>
    <property type="match status" value="1"/>
</dbReference>
<dbReference type="HAMAP" id="MF_01633">
    <property type="entry name" value="QueC"/>
    <property type="match status" value="1"/>
</dbReference>
<dbReference type="InterPro" id="IPR018317">
    <property type="entry name" value="QueC"/>
</dbReference>
<dbReference type="InterPro" id="IPR014729">
    <property type="entry name" value="Rossmann-like_a/b/a_fold"/>
</dbReference>
<dbReference type="NCBIfam" id="TIGR00364">
    <property type="entry name" value="7-cyano-7-deazaguanine synthase QueC"/>
    <property type="match status" value="1"/>
</dbReference>
<dbReference type="PANTHER" id="PTHR42914">
    <property type="entry name" value="7-CYANO-7-DEAZAGUANINE SYNTHASE"/>
    <property type="match status" value="1"/>
</dbReference>
<dbReference type="PANTHER" id="PTHR42914:SF1">
    <property type="entry name" value="7-CYANO-7-DEAZAGUANINE SYNTHASE"/>
    <property type="match status" value="1"/>
</dbReference>
<dbReference type="Pfam" id="PF06508">
    <property type="entry name" value="QueC"/>
    <property type="match status" value="1"/>
</dbReference>
<dbReference type="PIRSF" id="PIRSF006293">
    <property type="entry name" value="ExsB"/>
    <property type="match status" value="1"/>
</dbReference>
<dbReference type="SUPFAM" id="SSF52402">
    <property type="entry name" value="Adenine nucleotide alpha hydrolases-like"/>
    <property type="match status" value="1"/>
</dbReference>
<proteinExistence type="inferred from homology"/>
<feature type="chain" id="PRO_0000246966" description="7-cyano-7-deazaguanine synthase">
    <location>
        <begin position="1"/>
        <end position="224"/>
    </location>
</feature>
<feature type="binding site" evidence="1">
    <location>
        <begin position="8"/>
        <end position="18"/>
    </location>
    <ligand>
        <name>ATP</name>
        <dbReference type="ChEBI" id="CHEBI:30616"/>
    </ligand>
</feature>
<feature type="binding site" evidence="1">
    <location>
        <position position="186"/>
    </location>
    <ligand>
        <name>Zn(2+)</name>
        <dbReference type="ChEBI" id="CHEBI:29105"/>
    </ligand>
</feature>
<feature type="binding site" evidence="1">
    <location>
        <position position="196"/>
    </location>
    <ligand>
        <name>Zn(2+)</name>
        <dbReference type="ChEBI" id="CHEBI:29105"/>
    </ligand>
</feature>
<feature type="binding site" evidence="1">
    <location>
        <position position="199"/>
    </location>
    <ligand>
        <name>Zn(2+)</name>
        <dbReference type="ChEBI" id="CHEBI:29105"/>
    </ligand>
</feature>
<feature type="binding site" evidence="1">
    <location>
        <position position="202"/>
    </location>
    <ligand>
        <name>Zn(2+)</name>
        <dbReference type="ChEBI" id="CHEBI:29105"/>
    </ligand>
</feature>
<sequence>MKKAVVLLSGGMDSAAVIALAQEQGFAVYALSVRYGQRHTSELDAAARVAAAQGVVAHKVVDVDLRSIGGSALTDDIDVPDAGGDGIPVTYVPARNTIMLSLALGWAEVVGANDLFCGVNAVDYSGYPDCRPEFVRAFEVLANLATKAGVEGAGLRVHAPLQFLSKADIVREGVRLGVDFGLTVSCYRADADGRACGHCDACRLRAAGFADAGVPDPTHYAILS</sequence>
<gene>
    <name evidence="1" type="primary">queC</name>
    <name type="ordered locus">XOO1569</name>
</gene>
<keyword id="KW-0067">ATP-binding</keyword>
<keyword id="KW-0436">Ligase</keyword>
<keyword id="KW-0479">Metal-binding</keyword>
<keyword id="KW-0547">Nucleotide-binding</keyword>
<keyword id="KW-0671">Queuosine biosynthesis</keyword>
<keyword id="KW-0862">Zinc</keyword>